<evidence type="ECO:0000255" key="1">
    <source>
        <dbReference type="PROSITE-ProRule" id="PRU00238"/>
    </source>
</evidence>
<evidence type="ECO:0000269" key="2">
    <source>
    </source>
</evidence>
<evidence type="ECO:0000305" key="3"/>
<evidence type="ECO:0000312" key="4">
    <source>
        <dbReference type="EMBL" id="AAZ99824.1"/>
    </source>
</evidence>
<gene>
    <name type="primary">hbb1</name>
</gene>
<organism>
    <name type="scientific">Boreogadus saida</name>
    <name type="common">Polar cod</name>
    <name type="synonym">Gadus saida</name>
    <dbReference type="NCBI Taxonomy" id="44932"/>
    <lineage>
        <taxon>Eukaryota</taxon>
        <taxon>Metazoa</taxon>
        <taxon>Chordata</taxon>
        <taxon>Craniata</taxon>
        <taxon>Vertebrata</taxon>
        <taxon>Euteleostomi</taxon>
        <taxon>Actinopterygii</taxon>
        <taxon>Neopterygii</taxon>
        <taxon>Teleostei</taxon>
        <taxon>Neoteleostei</taxon>
        <taxon>Acanthomorphata</taxon>
        <taxon>Zeiogadaria</taxon>
        <taxon>Gadariae</taxon>
        <taxon>Gadiformes</taxon>
        <taxon>Gadoidei</taxon>
        <taxon>Gadidae</taxon>
        <taxon>Boreogadus</taxon>
    </lineage>
</organism>
<name>HBB1_BORSA</name>
<dbReference type="EMBL" id="DQ125472">
    <property type="protein sequence ID" value="AAZ99824.1"/>
    <property type="molecule type" value="mRNA"/>
</dbReference>
<dbReference type="SMR" id="Q1AGS7"/>
<dbReference type="GO" id="GO:0072562">
    <property type="term" value="C:blood microparticle"/>
    <property type="evidence" value="ECO:0007669"/>
    <property type="project" value="TreeGrafter"/>
</dbReference>
<dbReference type="GO" id="GO:0031838">
    <property type="term" value="C:haptoglobin-hemoglobin complex"/>
    <property type="evidence" value="ECO:0007669"/>
    <property type="project" value="TreeGrafter"/>
</dbReference>
<dbReference type="GO" id="GO:0005833">
    <property type="term" value="C:hemoglobin complex"/>
    <property type="evidence" value="ECO:0007669"/>
    <property type="project" value="InterPro"/>
</dbReference>
<dbReference type="GO" id="GO:0031720">
    <property type="term" value="F:haptoglobin binding"/>
    <property type="evidence" value="ECO:0007669"/>
    <property type="project" value="TreeGrafter"/>
</dbReference>
<dbReference type="GO" id="GO:0020037">
    <property type="term" value="F:heme binding"/>
    <property type="evidence" value="ECO:0007669"/>
    <property type="project" value="InterPro"/>
</dbReference>
<dbReference type="GO" id="GO:0046872">
    <property type="term" value="F:metal ion binding"/>
    <property type="evidence" value="ECO:0007669"/>
    <property type="project" value="UniProtKB-KW"/>
</dbReference>
<dbReference type="GO" id="GO:0043177">
    <property type="term" value="F:organic acid binding"/>
    <property type="evidence" value="ECO:0007669"/>
    <property type="project" value="TreeGrafter"/>
</dbReference>
<dbReference type="GO" id="GO:0019825">
    <property type="term" value="F:oxygen binding"/>
    <property type="evidence" value="ECO:0007669"/>
    <property type="project" value="InterPro"/>
</dbReference>
<dbReference type="GO" id="GO:0005344">
    <property type="term" value="F:oxygen carrier activity"/>
    <property type="evidence" value="ECO:0007669"/>
    <property type="project" value="UniProtKB-KW"/>
</dbReference>
<dbReference type="GO" id="GO:0004601">
    <property type="term" value="F:peroxidase activity"/>
    <property type="evidence" value="ECO:0007669"/>
    <property type="project" value="TreeGrafter"/>
</dbReference>
<dbReference type="GO" id="GO:0042744">
    <property type="term" value="P:hydrogen peroxide catabolic process"/>
    <property type="evidence" value="ECO:0007669"/>
    <property type="project" value="TreeGrafter"/>
</dbReference>
<dbReference type="CDD" id="cd08925">
    <property type="entry name" value="Hb-beta-like"/>
    <property type="match status" value="1"/>
</dbReference>
<dbReference type="FunFam" id="1.10.490.10:FF:000001">
    <property type="entry name" value="Hemoglobin subunit beta"/>
    <property type="match status" value="1"/>
</dbReference>
<dbReference type="Gene3D" id="1.10.490.10">
    <property type="entry name" value="Globins"/>
    <property type="match status" value="1"/>
</dbReference>
<dbReference type="InterPro" id="IPR000971">
    <property type="entry name" value="Globin"/>
</dbReference>
<dbReference type="InterPro" id="IPR009050">
    <property type="entry name" value="Globin-like_sf"/>
</dbReference>
<dbReference type="InterPro" id="IPR012292">
    <property type="entry name" value="Globin/Proto"/>
</dbReference>
<dbReference type="InterPro" id="IPR002337">
    <property type="entry name" value="Hemoglobin_b"/>
</dbReference>
<dbReference type="InterPro" id="IPR050056">
    <property type="entry name" value="Hemoglobin_oxygen_transport"/>
</dbReference>
<dbReference type="PANTHER" id="PTHR11442">
    <property type="entry name" value="HEMOGLOBIN FAMILY MEMBER"/>
    <property type="match status" value="1"/>
</dbReference>
<dbReference type="PANTHER" id="PTHR11442:SF7">
    <property type="entry name" value="HEMOGLOBIN SUBUNIT EPSILON"/>
    <property type="match status" value="1"/>
</dbReference>
<dbReference type="Pfam" id="PF00042">
    <property type="entry name" value="Globin"/>
    <property type="match status" value="1"/>
</dbReference>
<dbReference type="PRINTS" id="PR00814">
    <property type="entry name" value="BETAHAEM"/>
</dbReference>
<dbReference type="SUPFAM" id="SSF46458">
    <property type="entry name" value="Globin-like"/>
    <property type="match status" value="1"/>
</dbReference>
<dbReference type="PROSITE" id="PS01033">
    <property type="entry name" value="GLOBIN"/>
    <property type="match status" value="1"/>
</dbReference>
<reference evidence="3 4" key="1">
    <citation type="journal article" date="2006" name="J. Biol. Chem.">
        <title>The oxygen transport system in three species of the boreal fish family Gadidae. Molecular phylogeny of hemoglobin.</title>
        <authorList>
            <person name="Verde C."/>
            <person name="Balestrieri M."/>
            <person name="de Pascale D."/>
            <person name="Pagnozzi D."/>
            <person name="Lecointre G."/>
            <person name="di Prisco G."/>
        </authorList>
    </citation>
    <scope>PROTEIN SEQUENCE OF 2-147</scope>
    <scope>NUCLEOTIDE SEQUENCE [MRNA] OF 11-147</scope>
    <scope>FUNCTION</scope>
    <scope>SUBUNIT</scope>
    <source>
        <tissue evidence="2">Blood</tissue>
        <tissue evidence="2">Spleen</tissue>
    </source>
</reference>
<keyword id="KW-0903">Direct protein sequencing</keyword>
<keyword id="KW-0349">Heme</keyword>
<keyword id="KW-0408">Iron</keyword>
<keyword id="KW-0479">Metal-binding</keyword>
<keyword id="KW-0561">Oxygen transport</keyword>
<keyword id="KW-0813">Transport</keyword>
<proteinExistence type="evidence at protein level"/>
<feature type="initiator methionine" description="Removed" evidence="2">
    <location>
        <position position="1"/>
    </location>
</feature>
<feature type="chain" id="PRO_0000247582" description="Hemoglobin subunit beta-1">
    <location>
        <begin position="2"/>
        <end position="147"/>
    </location>
</feature>
<feature type="domain" description="Globin" evidence="1">
    <location>
        <begin position="3"/>
        <end position="147"/>
    </location>
</feature>
<feature type="binding site" description="distal binding residue" evidence="1">
    <location>
        <position position="64"/>
    </location>
    <ligand>
        <name>heme b</name>
        <dbReference type="ChEBI" id="CHEBI:60344"/>
    </ligand>
    <ligandPart>
        <name>Fe</name>
        <dbReference type="ChEBI" id="CHEBI:18248"/>
    </ligandPart>
</feature>
<feature type="binding site" description="proximal binding residue" evidence="1">
    <location>
        <position position="93"/>
    </location>
    <ligand>
        <name>heme b</name>
        <dbReference type="ChEBI" id="CHEBI:60344"/>
    </ligand>
    <ligandPart>
        <name>Fe</name>
        <dbReference type="ChEBI" id="CHEBI:18248"/>
    </ligandPart>
</feature>
<feature type="sequence conflict" description="In Ref. 1; AAZ99824." evidence="3" ref="1">
    <original>F</original>
    <variation>M</variation>
    <location>
        <position position="119"/>
    </location>
</feature>
<feature type="sequence conflict" description="In Ref. 1; AAZ99824." evidence="3" ref="1">
    <original>P</original>
    <variation>K</variation>
    <location>
        <position position="121"/>
    </location>
</feature>
<comment type="function">
    <text evidence="2 3">Involved in oxygen transport from gills to the various peripheral tissues.</text>
</comment>
<comment type="subunit">
    <text evidence="2">Hb 1 is a heterotetramer of two alpha-1 and two beta-1 chains. Hb 2 is a heterotetramer of two alpha-2 and two beta-1 chains.</text>
</comment>
<comment type="tissue specificity">
    <text evidence="3">Red blood cells.</text>
</comment>
<comment type="similarity">
    <text evidence="1">Belongs to the globin family.</text>
</comment>
<accession>Q1AGS7</accession>
<accession>P84607</accession>
<protein>
    <recommendedName>
        <fullName>Hemoglobin subunit beta-1</fullName>
    </recommendedName>
    <alternativeName>
        <fullName>Beta-1-globin</fullName>
    </alternativeName>
    <alternativeName>
        <fullName>Hemoglobin beta-1 chain</fullName>
    </alternativeName>
</protein>
<sequence>MVEWTATERTHIEAIWSKIDIDVCGPLALQRCLIVYPWTQRYFGSFGDLSTDAAIVGNPKVANHGVVALTGLRTALDHMDDIKATYATLSVLHSEKLHVDPDNFRLLCDCLTIVVAGKFGPTLRPEMQAAWQKYLSAVVSALGRQYH</sequence>